<feature type="chain" id="PRO_0000121866" description="tRNA pseudouridine synthase B">
    <location>
        <begin position="1"/>
        <end position="287"/>
    </location>
</feature>
<feature type="active site" description="Nucleophile" evidence="1">
    <location>
        <position position="38"/>
    </location>
</feature>
<proteinExistence type="inferred from homology"/>
<organism>
    <name type="scientific">Mycoplasma mobile (strain ATCC 43663 / 163K / NCTC 11711)</name>
    <name type="common">Mesomycoplasma mobile</name>
    <dbReference type="NCBI Taxonomy" id="267748"/>
    <lineage>
        <taxon>Bacteria</taxon>
        <taxon>Bacillati</taxon>
        <taxon>Mycoplasmatota</taxon>
        <taxon>Mycoplasmoidales</taxon>
        <taxon>Metamycoplasmataceae</taxon>
        <taxon>Mesomycoplasma</taxon>
    </lineage>
</organism>
<sequence length="287" mass="33062">MKMILLLRKTKNISSFNFINNFKKTKGFKKIGHCGTLDPLATGLLIVATDEDTKLIDYLDQKDKTYVARAKLGFETTTYDSEGEIINQSSNVKFTKEKLIEVLNSFIGLTKQMPPKYSAKKLNGIRAYDLARQNIDFELNEVEINITKIKLLSYNEDENYFDFEVVVSRGTYIRSLIYDIGIKLNSLAYMESLERTKIGNLFLEKNQDDKILNAKEIIQLEIIQLEKNQIENLSKGLLIDLKNEDNFYALFWKDEMIGFGQILNNVLKSKKLIGKKIQKILGDKQSE</sequence>
<accession>Q6KHH8</accession>
<evidence type="ECO:0000255" key="1">
    <source>
        <dbReference type="HAMAP-Rule" id="MF_01080"/>
    </source>
</evidence>
<name>TRUB_MYCM1</name>
<protein>
    <recommendedName>
        <fullName evidence="1">tRNA pseudouridine synthase B</fullName>
        <ecNumber evidence="1">5.4.99.25</ecNumber>
    </recommendedName>
    <alternativeName>
        <fullName evidence="1">tRNA pseudouridine(55) synthase</fullName>
        <shortName evidence="1">Psi55 synthase</shortName>
    </alternativeName>
    <alternativeName>
        <fullName evidence="1">tRNA pseudouridylate synthase</fullName>
    </alternativeName>
    <alternativeName>
        <fullName evidence="1">tRNA-uridine isomerase</fullName>
    </alternativeName>
</protein>
<keyword id="KW-0413">Isomerase</keyword>
<keyword id="KW-1185">Reference proteome</keyword>
<keyword id="KW-0819">tRNA processing</keyword>
<dbReference type="EC" id="5.4.99.25" evidence="1"/>
<dbReference type="EMBL" id="AE017308">
    <property type="protein sequence ID" value="AAT27952.1"/>
    <property type="molecule type" value="Genomic_DNA"/>
</dbReference>
<dbReference type="SMR" id="Q6KHH8"/>
<dbReference type="STRING" id="267748.MMOB4660"/>
<dbReference type="KEGG" id="mmo:MMOB4660"/>
<dbReference type="eggNOG" id="COG0130">
    <property type="taxonomic scope" value="Bacteria"/>
</dbReference>
<dbReference type="HOGENOM" id="CLU_032087_0_2_14"/>
<dbReference type="Proteomes" id="UP000009072">
    <property type="component" value="Chromosome"/>
</dbReference>
<dbReference type="GO" id="GO:0003723">
    <property type="term" value="F:RNA binding"/>
    <property type="evidence" value="ECO:0007669"/>
    <property type="project" value="InterPro"/>
</dbReference>
<dbReference type="GO" id="GO:0160148">
    <property type="term" value="F:tRNA pseudouridine(55) synthase activity"/>
    <property type="evidence" value="ECO:0007669"/>
    <property type="project" value="UniProtKB-EC"/>
</dbReference>
<dbReference type="GO" id="GO:1990481">
    <property type="term" value="P:mRNA pseudouridine synthesis"/>
    <property type="evidence" value="ECO:0007669"/>
    <property type="project" value="TreeGrafter"/>
</dbReference>
<dbReference type="GO" id="GO:0031119">
    <property type="term" value="P:tRNA pseudouridine synthesis"/>
    <property type="evidence" value="ECO:0007669"/>
    <property type="project" value="UniProtKB-UniRule"/>
</dbReference>
<dbReference type="CDD" id="cd02573">
    <property type="entry name" value="PseudoU_synth_EcTruB"/>
    <property type="match status" value="1"/>
</dbReference>
<dbReference type="Gene3D" id="3.30.2350.10">
    <property type="entry name" value="Pseudouridine synthase"/>
    <property type="match status" value="1"/>
</dbReference>
<dbReference type="HAMAP" id="MF_01080">
    <property type="entry name" value="TruB_bact"/>
    <property type="match status" value="1"/>
</dbReference>
<dbReference type="InterPro" id="IPR020103">
    <property type="entry name" value="PsdUridine_synth_cat_dom_sf"/>
</dbReference>
<dbReference type="InterPro" id="IPR002501">
    <property type="entry name" value="PsdUridine_synth_N"/>
</dbReference>
<dbReference type="InterPro" id="IPR014780">
    <property type="entry name" value="tRNA_psdUridine_synth_TruB"/>
</dbReference>
<dbReference type="NCBIfam" id="TIGR00431">
    <property type="entry name" value="TruB"/>
    <property type="match status" value="1"/>
</dbReference>
<dbReference type="PANTHER" id="PTHR13767:SF2">
    <property type="entry name" value="PSEUDOURIDYLATE SYNTHASE TRUB1"/>
    <property type="match status" value="1"/>
</dbReference>
<dbReference type="PANTHER" id="PTHR13767">
    <property type="entry name" value="TRNA-PSEUDOURIDINE SYNTHASE"/>
    <property type="match status" value="1"/>
</dbReference>
<dbReference type="Pfam" id="PF01509">
    <property type="entry name" value="TruB_N"/>
    <property type="match status" value="1"/>
</dbReference>
<dbReference type="SUPFAM" id="SSF55120">
    <property type="entry name" value="Pseudouridine synthase"/>
    <property type="match status" value="1"/>
</dbReference>
<reference key="1">
    <citation type="journal article" date="2004" name="Genome Res.">
        <title>The complete genome and proteome of Mycoplasma mobile.</title>
        <authorList>
            <person name="Jaffe J.D."/>
            <person name="Stange-Thomann N."/>
            <person name="Smith C."/>
            <person name="DeCaprio D."/>
            <person name="Fisher S."/>
            <person name="Butler J."/>
            <person name="Calvo S."/>
            <person name="Elkins T."/>
            <person name="FitzGerald M.G."/>
            <person name="Hafez N."/>
            <person name="Kodira C.D."/>
            <person name="Major J."/>
            <person name="Wang S."/>
            <person name="Wilkinson J."/>
            <person name="Nicol R."/>
            <person name="Nusbaum C."/>
            <person name="Birren B."/>
            <person name="Berg H.C."/>
            <person name="Church G.M."/>
        </authorList>
    </citation>
    <scope>NUCLEOTIDE SEQUENCE [LARGE SCALE GENOMIC DNA]</scope>
    <source>
        <strain>ATCC 43663 / NCTC 11711 / 163 K</strain>
    </source>
</reference>
<comment type="function">
    <text evidence="1">Responsible for synthesis of pseudouridine from uracil-55 in the psi GC loop of transfer RNAs.</text>
</comment>
<comment type="catalytic activity">
    <reaction evidence="1">
        <text>uridine(55) in tRNA = pseudouridine(55) in tRNA</text>
        <dbReference type="Rhea" id="RHEA:42532"/>
        <dbReference type="Rhea" id="RHEA-COMP:10101"/>
        <dbReference type="Rhea" id="RHEA-COMP:10102"/>
        <dbReference type="ChEBI" id="CHEBI:65314"/>
        <dbReference type="ChEBI" id="CHEBI:65315"/>
        <dbReference type="EC" id="5.4.99.25"/>
    </reaction>
</comment>
<comment type="similarity">
    <text evidence="1">Belongs to the pseudouridine synthase TruB family. Type 1 subfamily.</text>
</comment>
<gene>
    <name evidence="1" type="primary">truB</name>
    <name type="ordered locus">MMOB4660</name>
</gene>